<proteinExistence type="evidence at protein level"/>
<evidence type="ECO:0000269" key="1">
    <source>
    </source>
</evidence>
<evidence type="ECO:0000303" key="2">
    <source>
    </source>
</evidence>
<evidence type="ECO:0000305" key="3"/>
<evidence type="ECO:0000305" key="4">
    <source>
    </source>
</evidence>
<keyword id="KW-0903">Direct protein sequencing</keyword>
<keyword id="KW-0964">Secreted</keyword>
<organism>
    <name type="scientific">Scolia decorata ventralis</name>
    <name type="common">Solitary wasp</name>
    <dbReference type="NCBI Taxonomy" id="2856346"/>
    <lineage>
        <taxon>Eukaryota</taxon>
        <taxon>Metazoa</taxon>
        <taxon>Ecdysozoa</taxon>
        <taxon>Arthropoda</taxon>
        <taxon>Hexapoda</taxon>
        <taxon>Insecta</taxon>
        <taxon>Pterygota</taxon>
        <taxon>Neoptera</taxon>
        <taxon>Endopterygota</taxon>
        <taxon>Hymenoptera</taxon>
        <taxon>Apocrita</taxon>
        <taxon>Aculeata</taxon>
        <taxon>Scolioidea</taxon>
        <taxon>Scoliidae</taxon>
        <taxon>Scolia</taxon>
        <taxon>Scolia decorata</taxon>
    </lineage>
</organism>
<feature type="peptide" id="PRO_0000454098" description="Beta-scoliidine" evidence="1">
    <location>
        <begin position="1"/>
        <end position="14"/>
    </location>
</feature>
<feature type="peptide" id="PRO_0000454099" description="Alpha-scoliidine" evidence="1">
    <location>
        <begin position="1"/>
        <end position="12"/>
    </location>
</feature>
<name>NBRKB_SCODV</name>
<reference key="1">
    <citation type="journal article" date="2021" name="J. Venom. Anim. Toxins Incl. Trop. Dis.">
        <title>Novel neuroprotective peptides in the venom of the solitary scoliid wasp Scolia decorata ventralis.</title>
        <authorList>
            <person name="Alberto-Silva C."/>
            <person name="Portaro F.C.V."/>
            <person name="Kodama R.T."/>
            <person name="Pantaleao H.Q."/>
            <person name="Rangel M."/>
            <person name="Nihei K.I."/>
            <person name="Konno K."/>
        </authorList>
    </citation>
    <scope>PROTEIN SEQUENCE</scope>
    <scope>FUNCTION</scope>
    <scope>SYNTHESIS</scope>
    <scope>MASS SPECTROMETRY</scope>
    <scope>SUBCELLULAR LOCATION</scope>
    <source>
        <tissue>Venom</tissue>
    </source>
</reference>
<dbReference type="GO" id="GO:0005576">
    <property type="term" value="C:extracellular region"/>
    <property type="evidence" value="ECO:0007669"/>
    <property type="project" value="UniProtKB-SubCell"/>
</dbReference>
<protein>
    <recommendedName>
        <fullName evidence="2">Beta-scoliidine</fullName>
    </recommendedName>
    <component>
        <recommendedName>
            <fullName evidence="2">Alpha-scoliidine</fullName>
        </recommendedName>
    </component>
</protein>
<accession>P0DV01</accession>
<comment type="function">
    <molecule>Beta-scoliidine</molecule>
    <text evidence="1">Shows general neuroprotective effects against oxidative stress-induced neurotoxicity in PC12 cells. In fact, it shows cytotoxic effect after 3 hours of treatment, but it increases the cell number after 24 to 48 hours, suggesting it increases the cell rate proliferation. Is similar to bradykinin, but does not behave as ACE substrate or inhibitor.</text>
</comment>
<comment type="function">
    <molecule>Alpha-scoliidine</molecule>
    <text evidence="1">In contrast to beta-scoliidine, it does not show neuroprotective effects against oxidative stress-induced neurotoxicity in PC12 cells. Is similar to bradykinin, but does not behave as ACE substrate or inhibitor.</text>
</comment>
<comment type="subcellular location">
    <subcellularLocation>
        <location evidence="1">Secreted</location>
    </subcellularLocation>
</comment>
<comment type="tissue specificity">
    <text evidence="4">Expressed by the venom gland.</text>
</comment>
<comment type="mass spectrometry">
    <molecule>Beta-scoliidine</molecule>
</comment>
<comment type="mass spectrometry">
    <molecule>Alpha-scoliidine</molecule>
</comment>
<comment type="miscellaneous">
    <text evidence="1">Both alpha- and beta-scoliidines are the two major peptide components of the venom. Cleavage products of these peptides have also been found in the venom but are not shown here.</text>
</comment>
<comment type="similarity">
    <text evidence="3">Belongs to the bradykinin-related peptide family.</text>
</comment>
<sequence>DYVTVKGFSPLRKA</sequence>